<sequence length="438" mass="46174">MASPLYSVVLGLAIVSAIVAPTSSTSRGTLLHHGQKRPQPGLRVDLEQVDSGKNLTKYELIKRAIKRGERRMRSINAMLQSSSGIETPVYAGDGEYLMNVAIGTPDSSFSAIMDTGSDLIWTQCEPCTQCFSQPTPIFNPQDSSSFSTLPCESQYCQDLPSETCNNNECQYTYGYGDGSTTQGYMATETFTFETSSVPNIAFGCGEDNQGFGQGNGAGLIGMGWGPLSLPSQLGVGQFSYCMTSYGSSSPSTLALGSAASGVPEGSPSTTLIHSSLNPTYYYITLQGITVGGDNLGIPSSTFQLQDDGTGGMIIDSGTTLTYLPQDAYNAVAQAFTDQINLPTVDESSSGLSTCFQQPSDGSTVQVPEISMQFDGGVLNLGEQNILISPAEGVICLAMGSSSQLGISIFGNIQQQETQVLYDLQNLAVSFVPTQCGAS</sequence>
<gene>
    <name type="primary">nep2</name>
</gene>
<keyword id="KW-0064">Aspartyl protease</keyword>
<keyword id="KW-1015">Disulfide bond</keyword>
<keyword id="KW-0325">Glycoprotein</keyword>
<keyword id="KW-0378">Hydrolase</keyword>
<keyword id="KW-0645">Protease</keyword>
<keyword id="KW-0964">Secreted</keyword>
<keyword id="KW-0732">Signal</keyword>
<keyword id="KW-0865">Zymogen</keyword>
<organism>
    <name type="scientific">Nepenthes gracilis</name>
    <name type="common">Slender pitcher plant</name>
    <dbReference type="NCBI Taxonomy" id="150966"/>
    <lineage>
        <taxon>Eukaryota</taxon>
        <taxon>Viridiplantae</taxon>
        <taxon>Streptophyta</taxon>
        <taxon>Embryophyta</taxon>
        <taxon>Tracheophyta</taxon>
        <taxon>Spermatophyta</taxon>
        <taxon>Magnoliopsida</taxon>
        <taxon>eudicotyledons</taxon>
        <taxon>Gunneridae</taxon>
        <taxon>Pentapetalae</taxon>
        <taxon>Caryophyllales</taxon>
        <taxon>Nepenthaceae</taxon>
        <taxon>Nepenthes</taxon>
    </lineage>
</organism>
<proteinExistence type="evidence at protein level"/>
<protein>
    <recommendedName>
        <fullName>Aspartic proteinase nepenthesin-2</fullName>
        <ecNumber>3.4.23.12</ecNumber>
    </recommendedName>
    <alternativeName>
        <fullName>Nepenthesin-II</fullName>
    </alternativeName>
</protein>
<name>NEP2_NEPGR</name>
<evidence type="ECO:0000250" key="1"/>
<evidence type="ECO:0000255" key="2"/>
<evidence type="ECO:0000255" key="3">
    <source>
        <dbReference type="PROSITE-ProRule" id="PRU01103"/>
    </source>
</evidence>
<evidence type="ECO:0000255" key="4">
    <source>
        <dbReference type="PROSITE-ProRule" id="PRU10094"/>
    </source>
</evidence>
<evidence type="ECO:0000305" key="5"/>
<dbReference type="EC" id="3.4.23.12"/>
<dbReference type="EMBL" id="AB114915">
    <property type="protein sequence ID" value="BAD07475.1"/>
    <property type="molecule type" value="mRNA"/>
</dbReference>
<dbReference type="SMR" id="Q766C2"/>
<dbReference type="MEROPS" id="A01.040"/>
<dbReference type="GlyCosmos" id="Q766C2">
    <property type="glycosylation" value="1 site, No reported glycans"/>
</dbReference>
<dbReference type="BRENDA" id="3.4.23.12">
    <property type="organism ID" value="8734"/>
</dbReference>
<dbReference type="GO" id="GO:0005576">
    <property type="term" value="C:extracellular region"/>
    <property type="evidence" value="ECO:0007669"/>
    <property type="project" value="UniProtKB-SubCell"/>
</dbReference>
<dbReference type="GO" id="GO:0004190">
    <property type="term" value="F:aspartic-type endopeptidase activity"/>
    <property type="evidence" value="ECO:0007669"/>
    <property type="project" value="UniProtKB-KW"/>
</dbReference>
<dbReference type="GO" id="GO:0006508">
    <property type="term" value="P:proteolysis"/>
    <property type="evidence" value="ECO:0007669"/>
    <property type="project" value="UniProtKB-KW"/>
</dbReference>
<dbReference type="CDD" id="cd05476">
    <property type="entry name" value="pepsin_A_like_plant"/>
    <property type="match status" value="1"/>
</dbReference>
<dbReference type="FunFam" id="2.40.70.10:FF:000033">
    <property type="entry name" value="Aspartyl protease family protein"/>
    <property type="match status" value="1"/>
</dbReference>
<dbReference type="FunFam" id="2.40.70.10:FF:000016">
    <property type="entry name" value="Probable aspartic protease At2g35615"/>
    <property type="match status" value="1"/>
</dbReference>
<dbReference type="Gene3D" id="2.40.70.10">
    <property type="entry name" value="Acid Proteases"/>
    <property type="match status" value="2"/>
</dbReference>
<dbReference type="InterPro" id="IPR001461">
    <property type="entry name" value="Aspartic_peptidase_A1"/>
</dbReference>
<dbReference type="InterPro" id="IPR001969">
    <property type="entry name" value="Aspartic_peptidase_AS"/>
</dbReference>
<dbReference type="InterPro" id="IPR034161">
    <property type="entry name" value="Pepsin-like_plant"/>
</dbReference>
<dbReference type="InterPro" id="IPR033121">
    <property type="entry name" value="PEPTIDASE_A1"/>
</dbReference>
<dbReference type="InterPro" id="IPR021109">
    <property type="entry name" value="Peptidase_aspartic_dom_sf"/>
</dbReference>
<dbReference type="InterPro" id="IPR051708">
    <property type="entry name" value="Plant_Aspart_Prot_A1"/>
</dbReference>
<dbReference type="InterPro" id="IPR032799">
    <property type="entry name" value="TAXi_C"/>
</dbReference>
<dbReference type="InterPro" id="IPR032861">
    <property type="entry name" value="TAXi_N"/>
</dbReference>
<dbReference type="PANTHER" id="PTHR47967:SF23">
    <property type="entry name" value="OS04G0448300 PROTEIN"/>
    <property type="match status" value="1"/>
</dbReference>
<dbReference type="PANTHER" id="PTHR47967">
    <property type="entry name" value="OS07G0603500 PROTEIN-RELATED"/>
    <property type="match status" value="1"/>
</dbReference>
<dbReference type="Pfam" id="PF14541">
    <property type="entry name" value="TAXi_C"/>
    <property type="match status" value="1"/>
</dbReference>
<dbReference type="Pfam" id="PF14543">
    <property type="entry name" value="TAXi_N"/>
    <property type="match status" value="1"/>
</dbReference>
<dbReference type="PRINTS" id="PR00792">
    <property type="entry name" value="PEPSIN"/>
</dbReference>
<dbReference type="SUPFAM" id="SSF50630">
    <property type="entry name" value="Acid proteases"/>
    <property type="match status" value="1"/>
</dbReference>
<dbReference type="PROSITE" id="PS00141">
    <property type="entry name" value="ASP_PROTEASE"/>
    <property type="match status" value="1"/>
</dbReference>
<dbReference type="PROSITE" id="PS51767">
    <property type="entry name" value="PEPTIDASE_A1"/>
    <property type="match status" value="1"/>
</dbReference>
<comment type="function">
    <text>Extracellular proteinase found in the pitcher fluid of carnivorous plants. Digest prey for nitrogen uptake.</text>
</comment>
<comment type="catalytic activity">
    <reaction>
        <text>Similar to pepsin, but also cleaves on either side of Asp and at Lys-|-Arg.</text>
        <dbReference type="EC" id="3.4.23.12"/>
    </reaction>
</comment>
<comment type="activity regulation">
    <text evidence="1">Inhibited by pepstatin and by diazoacetyl-D,L-norleucine methyl ester (DAN) in the presence of Cu(2+) ions.</text>
</comment>
<comment type="biophysicochemical properties">
    <phDependence>
        <text>Optimum pH is 3.0. Retains 80% and 60% of the original activity after incubation for 30 days at pH 3.0 and pH 4.0 respectively. Unstable at pH higher than 5.0.</text>
    </phDependence>
    <temperatureDependence>
        <text>Optimum temperature is 45 degrees Celsius. Thermostable up to 50 degrees Celsius. Retains 44% of the original activity after incubation for 30 days at 50 degrees Celsius.</text>
    </temperatureDependence>
</comment>
<comment type="subcellular location">
    <subcellularLocation>
        <location evidence="1">Secreted</location>
    </subcellularLocation>
</comment>
<comment type="similarity">
    <text evidence="5">Belongs to the peptidase A1 family.</text>
</comment>
<reference key="1">
    <citation type="journal article" date="2004" name="Biochem. J.">
        <title>Enzymic and structural characterization of nepenthesin, a unique member of a novel subfamily of aspartic proteinases.</title>
        <authorList>
            <person name="Athauda S.B.P."/>
            <person name="Matsumoto K."/>
            <person name="Rajapakshe S."/>
            <person name="Kuribayashi M."/>
            <person name="Kojima M."/>
            <person name="Kubomura-Yoshida N."/>
            <person name="Iwamatsu A."/>
            <person name="Shibata C."/>
            <person name="Inoue H."/>
            <person name="Takahashi K."/>
        </authorList>
    </citation>
    <scope>NUCLEOTIDE SEQUENCE [MRNA]</scope>
    <scope>3D-STRUCTURE MODELING</scope>
    <scope>CHARACTERIZATION</scope>
    <source>
        <tissue>Pitcher</tissue>
    </source>
</reference>
<feature type="signal peptide" evidence="2">
    <location>
        <begin position="1"/>
        <end position="24"/>
    </location>
</feature>
<feature type="propeptide" id="PRO_0000025916" description="Activation peptide" evidence="1">
    <location>
        <begin position="25"/>
        <end position="79"/>
    </location>
</feature>
<feature type="chain" id="PRO_0000025917" description="Aspartic proteinase nepenthesin-2">
    <location>
        <begin position="80"/>
        <end position="438"/>
    </location>
</feature>
<feature type="domain" description="Peptidase A1" evidence="3">
    <location>
        <begin position="96"/>
        <end position="431"/>
    </location>
</feature>
<feature type="active site" evidence="4">
    <location>
        <position position="114"/>
    </location>
</feature>
<feature type="active site" evidence="4">
    <location>
        <position position="315"/>
    </location>
</feature>
<feature type="glycosylation site" description="N-linked (GlcNAc...) asparagine" evidence="2">
    <location>
        <position position="54"/>
    </location>
</feature>
<feature type="disulfide bond" evidence="5">
    <location>
        <begin position="124"/>
        <end position="127"/>
    </location>
</feature>
<feature type="disulfide bond" evidence="5">
    <location>
        <begin position="130"/>
        <end position="204"/>
    </location>
</feature>
<feature type="disulfide bond" evidence="5">
    <location>
        <begin position="151"/>
        <end position="169"/>
    </location>
</feature>
<feature type="disulfide bond" evidence="5">
    <location>
        <begin position="156"/>
        <end position="164"/>
    </location>
</feature>
<feature type="disulfide bond" evidence="5">
    <location>
        <begin position="241"/>
        <end position="435"/>
    </location>
</feature>
<feature type="disulfide bond" evidence="5">
    <location>
        <begin position="354"/>
        <end position="395"/>
    </location>
</feature>
<accession>Q766C2</accession>